<dbReference type="EMBL" id="CH954179">
    <property type="protein sequence ID" value="EDV55494.1"/>
    <property type="molecule type" value="Genomic_DNA"/>
</dbReference>
<dbReference type="SMR" id="B3NN00"/>
<dbReference type="EnsemblMetazoa" id="FBtr0142185">
    <property type="protein sequence ID" value="FBpp0140677"/>
    <property type="gene ID" value="FBgn0114305"/>
</dbReference>
<dbReference type="EnsemblMetazoa" id="XM_001975058.3">
    <property type="protein sequence ID" value="XP_001975094.1"/>
    <property type="gene ID" value="LOC6548185"/>
</dbReference>
<dbReference type="GeneID" id="6548185"/>
<dbReference type="KEGG" id="der:6548185"/>
<dbReference type="CTD" id="27335"/>
<dbReference type="eggNOG" id="KOG3252">
    <property type="taxonomic scope" value="Eukaryota"/>
</dbReference>
<dbReference type="HOGENOM" id="CLU_076723_1_0_1"/>
<dbReference type="OMA" id="WKHQGQG"/>
<dbReference type="OrthoDB" id="337745at2759"/>
<dbReference type="PhylomeDB" id="B3NN00"/>
<dbReference type="Proteomes" id="UP000008711">
    <property type="component" value="Unassembled WGS sequence"/>
</dbReference>
<dbReference type="GO" id="GO:0016282">
    <property type="term" value="C:eukaryotic 43S preinitiation complex"/>
    <property type="evidence" value="ECO:0007669"/>
    <property type="project" value="UniProtKB-UniRule"/>
</dbReference>
<dbReference type="GO" id="GO:0033290">
    <property type="term" value="C:eukaryotic 48S preinitiation complex"/>
    <property type="evidence" value="ECO:0007669"/>
    <property type="project" value="UniProtKB-UniRule"/>
</dbReference>
<dbReference type="GO" id="GO:0005852">
    <property type="term" value="C:eukaryotic translation initiation factor 3 complex"/>
    <property type="evidence" value="ECO:0007669"/>
    <property type="project" value="UniProtKB-UniRule"/>
</dbReference>
<dbReference type="GO" id="GO:0043022">
    <property type="term" value="F:ribosome binding"/>
    <property type="evidence" value="ECO:0007669"/>
    <property type="project" value="InterPro"/>
</dbReference>
<dbReference type="GO" id="GO:0003723">
    <property type="term" value="F:RNA binding"/>
    <property type="evidence" value="ECO:0007669"/>
    <property type="project" value="UniProtKB-UniRule"/>
</dbReference>
<dbReference type="GO" id="GO:0003743">
    <property type="term" value="F:translation initiation factor activity"/>
    <property type="evidence" value="ECO:0007669"/>
    <property type="project" value="UniProtKB-UniRule"/>
</dbReference>
<dbReference type="GO" id="GO:0001732">
    <property type="term" value="P:formation of cytoplasmic translation initiation complex"/>
    <property type="evidence" value="ECO:0007669"/>
    <property type="project" value="UniProtKB-UniRule"/>
</dbReference>
<dbReference type="GO" id="GO:0006446">
    <property type="term" value="P:regulation of translational initiation"/>
    <property type="evidence" value="ECO:0007669"/>
    <property type="project" value="InterPro"/>
</dbReference>
<dbReference type="FunFam" id="1.10.10.10:FF:000212">
    <property type="entry name" value="Eukaryotic translation initiation factor 3 subunit K"/>
    <property type="match status" value="1"/>
</dbReference>
<dbReference type="FunFam" id="1.25.40.250:FF:000001">
    <property type="entry name" value="Eukaryotic translation initiation factor 3 subunit K"/>
    <property type="match status" value="1"/>
</dbReference>
<dbReference type="Gene3D" id="1.25.40.250">
    <property type="entry name" value="ARM repeat, domain 1"/>
    <property type="match status" value="1"/>
</dbReference>
<dbReference type="Gene3D" id="1.10.10.10">
    <property type="entry name" value="Winged helix-like DNA-binding domain superfamily/Winged helix DNA-binding domain"/>
    <property type="match status" value="1"/>
</dbReference>
<dbReference type="HAMAP" id="MF_03010">
    <property type="entry name" value="eIF3k"/>
    <property type="match status" value="1"/>
</dbReference>
<dbReference type="InterPro" id="IPR016024">
    <property type="entry name" value="ARM-type_fold"/>
</dbReference>
<dbReference type="InterPro" id="IPR033464">
    <property type="entry name" value="CSN8_PSD8_EIF3K"/>
</dbReference>
<dbReference type="InterPro" id="IPR009374">
    <property type="entry name" value="eIF3k"/>
</dbReference>
<dbReference type="InterPro" id="IPR000717">
    <property type="entry name" value="PCI_dom"/>
</dbReference>
<dbReference type="InterPro" id="IPR016020">
    <property type="entry name" value="Transl_init_fac_sub12_N_euk"/>
</dbReference>
<dbReference type="InterPro" id="IPR036388">
    <property type="entry name" value="WH-like_DNA-bd_sf"/>
</dbReference>
<dbReference type="InterPro" id="IPR036390">
    <property type="entry name" value="WH_DNA-bd_sf"/>
</dbReference>
<dbReference type="PANTHER" id="PTHR13022">
    <property type="entry name" value="EUKARYOTIC TRANSLATION INITIATION FACTOR 3 SUBUNIT 11"/>
    <property type="match status" value="1"/>
</dbReference>
<dbReference type="PANTHER" id="PTHR13022:SF0">
    <property type="entry name" value="EUKARYOTIC TRANSLATION INITIATION FACTOR 3 SUBUNIT K"/>
    <property type="match status" value="1"/>
</dbReference>
<dbReference type="Pfam" id="PF10075">
    <property type="entry name" value="CSN8_PSD8_EIF3K"/>
    <property type="match status" value="1"/>
</dbReference>
<dbReference type="SUPFAM" id="SSF48371">
    <property type="entry name" value="ARM repeat"/>
    <property type="match status" value="1"/>
</dbReference>
<dbReference type="SUPFAM" id="SSF46785">
    <property type="entry name" value="Winged helix' DNA-binding domain"/>
    <property type="match status" value="1"/>
</dbReference>
<dbReference type="PROSITE" id="PS50250">
    <property type="entry name" value="PCI"/>
    <property type="match status" value="1"/>
</dbReference>
<name>EIF3K_DROER</name>
<sequence length="222" mass="25611">MSHLVKMENGQSQTIQEMLGCIERYNPDHLKTLEAYVQDQAKNNTYDLEANLAVLKLYQFNPHMLNIDITYTILLKSLTSLPHTDFVMAKCLLLPQQMKDENVQTIIDLADILERADFTLFWQRAEVNRNMFRHIAGFHDSIRKFVSHVVSTTFQTIRKDLLKELLGGIEDSTLESWIKRNGWKHQGQGLVVVAMQDDKIKTKNITEKIEFDNVGGLMAQCL</sequence>
<accession>B3NN00</accession>
<organism>
    <name type="scientific">Drosophila erecta</name>
    <name type="common">Fruit fly</name>
    <dbReference type="NCBI Taxonomy" id="7220"/>
    <lineage>
        <taxon>Eukaryota</taxon>
        <taxon>Metazoa</taxon>
        <taxon>Ecdysozoa</taxon>
        <taxon>Arthropoda</taxon>
        <taxon>Hexapoda</taxon>
        <taxon>Insecta</taxon>
        <taxon>Pterygota</taxon>
        <taxon>Neoptera</taxon>
        <taxon>Endopterygota</taxon>
        <taxon>Diptera</taxon>
        <taxon>Brachycera</taxon>
        <taxon>Muscomorpha</taxon>
        <taxon>Ephydroidea</taxon>
        <taxon>Drosophilidae</taxon>
        <taxon>Drosophila</taxon>
        <taxon>Sophophora</taxon>
    </lineage>
</organism>
<feature type="chain" id="PRO_0000365041" description="Eukaryotic translation initiation factor 3 subunit K">
    <location>
        <begin position="1"/>
        <end position="222"/>
    </location>
</feature>
<feature type="domain" description="PCI" evidence="2">
    <location>
        <begin position="46"/>
        <end position="208"/>
    </location>
</feature>
<comment type="function">
    <text evidence="1">Component of the eukaryotic translation initiation factor 3 (eIF-3) complex, which is involved in protein synthesis of a specialized repertoire of mRNAs and, together with other initiation factors, stimulates binding of mRNA and methionyl-tRNAi to the 40S ribosome. The eIF-3 complex specifically targets and initiates translation of a subset of mRNAs involved in cell proliferation.</text>
</comment>
<comment type="subunit">
    <text evidence="1">Component of the eukaryotic translation initiation factor 3 (eIF-3) complex. The eIF-3 complex interacts with pix.</text>
</comment>
<comment type="subcellular location">
    <subcellularLocation>
        <location evidence="1">Cytoplasm</location>
    </subcellularLocation>
</comment>
<comment type="similarity">
    <text evidence="1">Belongs to the eIF-3 subunit K family.</text>
</comment>
<keyword id="KW-0963">Cytoplasm</keyword>
<keyword id="KW-0396">Initiation factor</keyword>
<keyword id="KW-0648">Protein biosynthesis</keyword>
<gene>
    <name type="ORF">GG22131</name>
</gene>
<evidence type="ECO:0000255" key="1">
    <source>
        <dbReference type="HAMAP-Rule" id="MF_03010"/>
    </source>
</evidence>
<evidence type="ECO:0000255" key="2">
    <source>
        <dbReference type="PROSITE-ProRule" id="PRU01185"/>
    </source>
</evidence>
<protein>
    <recommendedName>
        <fullName evidence="1">Eukaryotic translation initiation factor 3 subunit K</fullName>
        <shortName evidence="1">eIF3k</shortName>
    </recommendedName>
    <alternativeName>
        <fullName evidence="1">eIF-3 p25</fullName>
    </alternativeName>
</protein>
<reference key="1">
    <citation type="journal article" date="2007" name="Nature">
        <title>Evolution of genes and genomes on the Drosophila phylogeny.</title>
        <authorList>
            <consortium name="Drosophila 12 genomes consortium"/>
        </authorList>
    </citation>
    <scope>NUCLEOTIDE SEQUENCE [LARGE SCALE GENOMIC DNA]</scope>
    <source>
        <strain>Tucson 14021-0224.01</strain>
    </source>
</reference>
<proteinExistence type="inferred from homology"/>